<feature type="chain" id="PRO_0000128913" description="DNA-directed RNA polymerase subunit omega">
    <location>
        <begin position="1"/>
        <end position="70"/>
    </location>
</feature>
<gene>
    <name evidence="1" type="primary">rpoZ</name>
    <name type="ordered locus">BA_4008</name>
    <name type="ordered locus">GBAA_4008</name>
    <name type="ordered locus">BAS3721</name>
</gene>
<keyword id="KW-0240">DNA-directed RNA polymerase</keyword>
<keyword id="KW-0548">Nucleotidyltransferase</keyword>
<keyword id="KW-1185">Reference proteome</keyword>
<keyword id="KW-0804">Transcription</keyword>
<keyword id="KW-0808">Transferase</keyword>
<sequence>MLNPSIDSLLTKIDSKYTLVTVAAKRAREMQLANNCVVEKPVSHKCVGKALEEIDMEALSYVPSEDKVTE</sequence>
<comment type="function">
    <text evidence="1">Promotes RNA polymerase assembly. Latches the N- and C-terminal regions of the beta' subunit thereby facilitating its interaction with the beta and alpha subunits.</text>
</comment>
<comment type="catalytic activity">
    <reaction evidence="1">
        <text>RNA(n) + a ribonucleoside 5'-triphosphate = RNA(n+1) + diphosphate</text>
        <dbReference type="Rhea" id="RHEA:21248"/>
        <dbReference type="Rhea" id="RHEA-COMP:14527"/>
        <dbReference type="Rhea" id="RHEA-COMP:17342"/>
        <dbReference type="ChEBI" id="CHEBI:33019"/>
        <dbReference type="ChEBI" id="CHEBI:61557"/>
        <dbReference type="ChEBI" id="CHEBI:140395"/>
        <dbReference type="EC" id="2.7.7.6"/>
    </reaction>
</comment>
<comment type="subunit">
    <text evidence="1">The RNAP catalytic core consists of 2 alpha, 1 beta, 1 beta' and 1 omega subunit. When a sigma factor is associated with the core the holoenzyme is formed, which can initiate transcription.</text>
</comment>
<comment type="similarity">
    <text evidence="1">Belongs to the RNA polymerase subunit omega family.</text>
</comment>
<proteinExistence type="inferred from homology"/>
<protein>
    <recommendedName>
        <fullName evidence="1">DNA-directed RNA polymerase subunit omega</fullName>
        <shortName evidence="1">RNAP omega subunit</shortName>
        <ecNumber evidence="1">2.7.7.6</ecNumber>
    </recommendedName>
    <alternativeName>
        <fullName evidence="1">RNA polymerase omega subunit</fullName>
    </alternativeName>
    <alternativeName>
        <fullName evidence="1">Transcriptase subunit omega</fullName>
    </alternativeName>
</protein>
<dbReference type="EC" id="2.7.7.6" evidence="1"/>
<dbReference type="EMBL" id="AE016879">
    <property type="protein sequence ID" value="AAP27736.1"/>
    <property type="molecule type" value="Genomic_DNA"/>
</dbReference>
<dbReference type="EMBL" id="AE017334">
    <property type="protein sequence ID" value="AAT33125.1"/>
    <property type="molecule type" value="Genomic_DNA"/>
</dbReference>
<dbReference type="EMBL" id="AE017225">
    <property type="protein sequence ID" value="AAT56023.1"/>
    <property type="molecule type" value="Genomic_DNA"/>
</dbReference>
<dbReference type="RefSeq" id="NP_846250.1">
    <property type="nucleotide sequence ID" value="NC_003997.3"/>
</dbReference>
<dbReference type="RefSeq" id="WP_000933970.1">
    <property type="nucleotide sequence ID" value="NZ_WXXJ01000026.1"/>
</dbReference>
<dbReference type="RefSeq" id="YP_029972.1">
    <property type="nucleotide sequence ID" value="NC_005945.1"/>
</dbReference>
<dbReference type="SMR" id="Q81WG8"/>
<dbReference type="STRING" id="261594.GBAA_4008"/>
<dbReference type="DNASU" id="1086722"/>
<dbReference type="GeneID" id="75087006"/>
<dbReference type="KEGG" id="ban:BA_4008"/>
<dbReference type="KEGG" id="bar:GBAA_4008"/>
<dbReference type="KEGG" id="bat:BAS3721"/>
<dbReference type="PATRIC" id="fig|198094.11.peg.3978"/>
<dbReference type="eggNOG" id="COG1758">
    <property type="taxonomic scope" value="Bacteria"/>
</dbReference>
<dbReference type="HOGENOM" id="CLU_125406_6_0_9"/>
<dbReference type="OMA" id="YHSAKPV"/>
<dbReference type="OrthoDB" id="9815459at2"/>
<dbReference type="Proteomes" id="UP000000427">
    <property type="component" value="Chromosome"/>
</dbReference>
<dbReference type="Proteomes" id="UP000000594">
    <property type="component" value="Chromosome"/>
</dbReference>
<dbReference type="GO" id="GO:0000428">
    <property type="term" value="C:DNA-directed RNA polymerase complex"/>
    <property type="evidence" value="ECO:0007669"/>
    <property type="project" value="UniProtKB-KW"/>
</dbReference>
<dbReference type="GO" id="GO:0003677">
    <property type="term" value="F:DNA binding"/>
    <property type="evidence" value="ECO:0007669"/>
    <property type="project" value="UniProtKB-UniRule"/>
</dbReference>
<dbReference type="GO" id="GO:0003899">
    <property type="term" value="F:DNA-directed RNA polymerase activity"/>
    <property type="evidence" value="ECO:0007669"/>
    <property type="project" value="UniProtKB-UniRule"/>
</dbReference>
<dbReference type="GO" id="GO:0006351">
    <property type="term" value="P:DNA-templated transcription"/>
    <property type="evidence" value="ECO:0007669"/>
    <property type="project" value="UniProtKB-UniRule"/>
</dbReference>
<dbReference type="Gene3D" id="3.90.940.10">
    <property type="match status" value="1"/>
</dbReference>
<dbReference type="HAMAP" id="MF_00366">
    <property type="entry name" value="RNApol_bact_RpoZ"/>
    <property type="match status" value="1"/>
</dbReference>
<dbReference type="InterPro" id="IPR003716">
    <property type="entry name" value="DNA-dir_RNA_pol_omega"/>
</dbReference>
<dbReference type="InterPro" id="IPR006110">
    <property type="entry name" value="Pol_omega/Rpo6/RPB6"/>
</dbReference>
<dbReference type="InterPro" id="IPR036161">
    <property type="entry name" value="RPB6/omega-like_sf"/>
</dbReference>
<dbReference type="NCBIfam" id="TIGR00690">
    <property type="entry name" value="rpoZ"/>
    <property type="match status" value="1"/>
</dbReference>
<dbReference type="PANTHER" id="PTHR34476">
    <property type="entry name" value="DNA-DIRECTED RNA POLYMERASE SUBUNIT OMEGA"/>
    <property type="match status" value="1"/>
</dbReference>
<dbReference type="PANTHER" id="PTHR34476:SF1">
    <property type="entry name" value="DNA-DIRECTED RNA POLYMERASE SUBUNIT OMEGA"/>
    <property type="match status" value="1"/>
</dbReference>
<dbReference type="Pfam" id="PF01192">
    <property type="entry name" value="RNA_pol_Rpb6"/>
    <property type="match status" value="1"/>
</dbReference>
<dbReference type="SMART" id="SM01409">
    <property type="entry name" value="RNA_pol_Rpb6"/>
    <property type="match status" value="1"/>
</dbReference>
<dbReference type="SUPFAM" id="SSF63562">
    <property type="entry name" value="RPB6/omega subunit-like"/>
    <property type="match status" value="1"/>
</dbReference>
<evidence type="ECO:0000255" key="1">
    <source>
        <dbReference type="HAMAP-Rule" id="MF_00366"/>
    </source>
</evidence>
<name>RPOZ_BACAN</name>
<organism>
    <name type="scientific">Bacillus anthracis</name>
    <dbReference type="NCBI Taxonomy" id="1392"/>
    <lineage>
        <taxon>Bacteria</taxon>
        <taxon>Bacillati</taxon>
        <taxon>Bacillota</taxon>
        <taxon>Bacilli</taxon>
        <taxon>Bacillales</taxon>
        <taxon>Bacillaceae</taxon>
        <taxon>Bacillus</taxon>
        <taxon>Bacillus cereus group</taxon>
    </lineage>
</organism>
<reference key="1">
    <citation type="journal article" date="2003" name="Nature">
        <title>The genome sequence of Bacillus anthracis Ames and comparison to closely related bacteria.</title>
        <authorList>
            <person name="Read T.D."/>
            <person name="Peterson S.N."/>
            <person name="Tourasse N.J."/>
            <person name="Baillie L.W."/>
            <person name="Paulsen I.T."/>
            <person name="Nelson K.E."/>
            <person name="Tettelin H."/>
            <person name="Fouts D.E."/>
            <person name="Eisen J.A."/>
            <person name="Gill S.R."/>
            <person name="Holtzapple E.K."/>
            <person name="Okstad O.A."/>
            <person name="Helgason E."/>
            <person name="Rilstone J."/>
            <person name="Wu M."/>
            <person name="Kolonay J.F."/>
            <person name="Beanan M.J."/>
            <person name="Dodson R.J."/>
            <person name="Brinkac L.M."/>
            <person name="Gwinn M.L."/>
            <person name="DeBoy R.T."/>
            <person name="Madpu R."/>
            <person name="Daugherty S.C."/>
            <person name="Durkin A.S."/>
            <person name="Haft D.H."/>
            <person name="Nelson W.C."/>
            <person name="Peterson J.D."/>
            <person name="Pop M."/>
            <person name="Khouri H.M."/>
            <person name="Radune D."/>
            <person name="Benton J.L."/>
            <person name="Mahamoud Y."/>
            <person name="Jiang L."/>
            <person name="Hance I.R."/>
            <person name="Weidman J.F."/>
            <person name="Berry K.J."/>
            <person name="Plaut R.D."/>
            <person name="Wolf A.M."/>
            <person name="Watkins K.L."/>
            <person name="Nierman W.C."/>
            <person name="Hazen A."/>
            <person name="Cline R.T."/>
            <person name="Redmond C."/>
            <person name="Thwaite J.E."/>
            <person name="White O."/>
            <person name="Salzberg S.L."/>
            <person name="Thomason B."/>
            <person name="Friedlander A.M."/>
            <person name="Koehler T.M."/>
            <person name="Hanna P.C."/>
            <person name="Kolstoe A.-B."/>
            <person name="Fraser C.M."/>
        </authorList>
    </citation>
    <scope>NUCLEOTIDE SEQUENCE [LARGE SCALE GENOMIC DNA]</scope>
    <source>
        <strain>Ames / isolate Porton</strain>
    </source>
</reference>
<reference key="2">
    <citation type="journal article" date="2009" name="J. Bacteriol.">
        <title>The complete genome sequence of Bacillus anthracis Ames 'Ancestor'.</title>
        <authorList>
            <person name="Ravel J."/>
            <person name="Jiang L."/>
            <person name="Stanley S.T."/>
            <person name="Wilson M.R."/>
            <person name="Decker R.S."/>
            <person name="Read T.D."/>
            <person name="Worsham P."/>
            <person name="Keim P.S."/>
            <person name="Salzberg S.L."/>
            <person name="Fraser-Liggett C.M."/>
            <person name="Rasko D.A."/>
        </authorList>
    </citation>
    <scope>NUCLEOTIDE SEQUENCE [LARGE SCALE GENOMIC DNA]</scope>
    <source>
        <strain>Ames ancestor</strain>
    </source>
</reference>
<reference key="3">
    <citation type="submission" date="2004-01" db="EMBL/GenBank/DDBJ databases">
        <title>Complete genome sequence of Bacillus anthracis Sterne.</title>
        <authorList>
            <person name="Brettin T.S."/>
            <person name="Bruce D."/>
            <person name="Challacombe J.F."/>
            <person name="Gilna P."/>
            <person name="Han C."/>
            <person name="Hill K."/>
            <person name="Hitchcock P."/>
            <person name="Jackson P."/>
            <person name="Keim P."/>
            <person name="Longmire J."/>
            <person name="Lucas S."/>
            <person name="Okinaka R."/>
            <person name="Richardson P."/>
            <person name="Rubin E."/>
            <person name="Tice H."/>
        </authorList>
    </citation>
    <scope>NUCLEOTIDE SEQUENCE [LARGE SCALE GENOMIC DNA]</scope>
    <source>
        <strain>Sterne</strain>
    </source>
</reference>
<accession>Q81WG8</accession>
<accession>Q6HUL6</accession>
<accession>Q6KNV0</accession>